<feature type="chain" id="PRO_1000121889" description="Glutamate-1-semialdehyde 2,1-aminomutase">
    <location>
        <begin position="1"/>
        <end position="449"/>
    </location>
</feature>
<feature type="modified residue" description="N6-(pyridoxal phosphate)lysine" evidence="1">
    <location>
        <position position="275"/>
    </location>
</feature>
<keyword id="KW-0963">Cytoplasm</keyword>
<keyword id="KW-0413">Isomerase</keyword>
<keyword id="KW-0627">Porphyrin biosynthesis</keyword>
<keyword id="KW-0663">Pyridoxal phosphate</keyword>
<accession>A8LCD0</accession>
<evidence type="ECO:0000255" key="1">
    <source>
        <dbReference type="HAMAP-Rule" id="MF_00375"/>
    </source>
</evidence>
<reference key="1">
    <citation type="journal article" date="2007" name="Genome Res.">
        <title>Genome characteristics of facultatively symbiotic Frankia sp. strains reflect host range and host plant biogeography.</title>
        <authorList>
            <person name="Normand P."/>
            <person name="Lapierre P."/>
            <person name="Tisa L.S."/>
            <person name="Gogarten J.P."/>
            <person name="Alloisio N."/>
            <person name="Bagnarol E."/>
            <person name="Bassi C.A."/>
            <person name="Berry A.M."/>
            <person name="Bickhart D.M."/>
            <person name="Choisne N."/>
            <person name="Couloux A."/>
            <person name="Cournoyer B."/>
            <person name="Cruveiller S."/>
            <person name="Daubin V."/>
            <person name="Demange N."/>
            <person name="Francino M.P."/>
            <person name="Goltsman E."/>
            <person name="Huang Y."/>
            <person name="Kopp O.R."/>
            <person name="Labarre L."/>
            <person name="Lapidus A."/>
            <person name="Lavire C."/>
            <person name="Marechal J."/>
            <person name="Martinez M."/>
            <person name="Mastronunzio J.E."/>
            <person name="Mullin B.C."/>
            <person name="Niemann J."/>
            <person name="Pujic P."/>
            <person name="Rawnsley T."/>
            <person name="Rouy Z."/>
            <person name="Schenowitz C."/>
            <person name="Sellstedt A."/>
            <person name="Tavares F."/>
            <person name="Tomkins J.P."/>
            <person name="Vallenet D."/>
            <person name="Valverde C."/>
            <person name="Wall L.G."/>
            <person name="Wang Y."/>
            <person name="Medigue C."/>
            <person name="Benson D.R."/>
        </authorList>
    </citation>
    <scope>NUCLEOTIDE SEQUENCE [LARGE SCALE GENOMIC DNA]</scope>
    <source>
        <strain>EAN1pec</strain>
    </source>
</reference>
<dbReference type="EC" id="5.4.3.8" evidence="1"/>
<dbReference type="EMBL" id="CP000820">
    <property type="protein sequence ID" value="ABW15467.1"/>
    <property type="molecule type" value="Genomic_DNA"/>
</dbReference>
<dbReference type="RefSeq" id="WP_020463547.1">
    <property type="nucleotide sequence ID" value="NC_009921.1"/>
</dbReference>
<dbReference type="SMR" id="A8LCD0"/>
<dbReference type="STRING" id="298653.Franean1_6123"/>
<dbReference type="KEGG" id="fre:Franean1_6123"/>
<dbReference type="eggNOG" id="COG0001">
    <property type="taxonomic scope" value="Bacteria"/>
</dbReference>
<dbReference type="HOGENOM" id="CLU_016922_1_5_11"/>
<dbReference type="UniPathway" id="UPA00251">
    <property type="reaction ID" value="UER00317"/>
</dbReference>
<dbReference type="GO" id="GO:0005737">
    <property type="term" value="C:cytoplasm"/>
    <property type="evidence" value="ECO:0007669"/>
    <property type="project" value="UniProtKB-SubCell"/>
</dbReference>
<dbReference type="GO" id="GO:0042286">
    <property type="term" value="F:glutamate-1-semialdehyde 2,1-aminomutase activity"/>
    <property type="evidence" value="ECO:0007669"/>
    <property type="project" value="UniProtKB-UniRule"/>
</dbReference>
<dbReference type="GO" id="GO:0030170">
    <property type="term" value="F:pyridoxal phosphate binding"/>
    <property type="evidence" value="ECO:0007669"/>
    <property type="project" value="InterPro"/>
</dbReference>
<dbReference type="GO" id="GO:0008483">
    <property type="term" value="F:transaminase activity"/>
    <property type="evidence" value="ECO:0007669"/>
    <property type="project" value="InterPro"/>
</dbReference>
<dbReference type="GO" id="GO:0006782">
    <property type="term" value="P:protoporphyrinogen IX biosynthetic process"/>
    <property type="evidence" value="ECO:0007669"/>
    <property type="project" value="UniProtKB-UniRule"/>
</dbReference>
<dbReference type="CDD" id="cd00610">
    <property type="entry name" value="OAT_like"/>
    <property type="match status" value="1"/>
</dbReference>
<dbReference type="FunFam" id="3.40.640.10:FF:000021">
    <property type="entry name" value="Glutamate-1-semialdehyde 2,1-aminomutase"/>
    <property type="match status" value="1"/>
</dbReference>
<dbReference type="Gene3D" id="3.90.1150.10">
    <property type="entry name" value="Aspartate Aminotransferase, domain 1"/>
    <property type="match status" value="1"/>
</dbReference>
<dbReference type="Gene3D" id="3.40.640.10">
    <property type="entry name" value="Type I PLP-dependent aspartate aminotransferase-like (Major domain)"/>
    <property type="match status" value="1"/>
</dbReference>
<dbReference type="HAMAP" id="MF_00375">
    <property type="entry name" value="HemL_aminotrans_3"/>
    <property type="match status" value="1"/>
</dbReference>
<dbReference type="InterPro" id="IPR004639">
    <property type="entry name" value="4pyrrol_synth_GluAld_NH2Trfase"/>
</dbReference>
<dbReference type="InterPro" id="IPR005814">
    <property type="entry name" value="Aminotrans_3"/>
</dbReference>
<dbReference type="InterPro" id="IPR049704">
    <property type="entry name" value="Aminotrans_3_PPA_site"/>
</dbReference>
<dbReference type="InterPro" id="IPR015424">
    <property type="entry name" value="PyrdxlP-dep_Trfase"/>
</dbReference>
<dbReference type="InterPro" id="IPR015421">
    <property type="entry name" value="PyrdxlP-dep_Trfase_major"/>
</dbReference>
<dbReference type="InterPro" id="IPR015422">
    <property type="entry name" value="PyrdxlP-dep_Trfase_small"/>
</dbReference>
<dbReference type="NCBIfam" id="TIGR00713">
    <property type="entry name" value="hemL"/>
    <property type="match status" value="1"/>
</dbReference>
<dbReference type="NCBIfam" id="NF000818">
    <property type="entry name" value="PRK00062.1"/>
    <property type="match status" value="1"/>
</dbReference>
<dbReference type="PANTHER" id="PTHR43713">
    <property type="entry name" value="GLUTAMATE-1-SEMIALDEHYDE 2,1-AMINOMUTASE"/>
    <property type="match status" value="1"/>
</dbReference>
<dbReference type="PANTHER" id="PTHR43713:SF3">
    <property type="entry name" value="GLUTAMATE-1-SEMIALDEHYDE 2,1-AMINOMUTASE 1, CHLOROPLASTIC-RELATED"/>
    <property type="match status" value="1"/>
</dbReference>
<dbReference type="Pfam" id="PF00202">
    <property type="entry name" value="Aminotran_3"/>
    <property type="match status" value="1"/>
</dbReference>
<dbReference type="SUPFAM" id="SSF53383">
    <property type="entry name" value="PLP-dependent transferases"/>
    <property type="match status" value="1"/>
</dbReference>
<dbReference type="PROSITE" id="PS00600">
    <property type="entry name" value="AA_TRANSFER_CLASS_3"/>
    <property type="match status" value="1"/>
</dbReference>
<organism>
    <name type="scientific">Parafrankia sp. (strain EAN1pec)</name>
    <dbReference type="NCBI Taxonomy" id="298653"/>
    <lineage>
        <taxon>Bacteria</taxon>
        <taxon>Bacillati</taxon>
        <taxon>Actinomycetota</taxon>
        <taxon>Actinomycetes</taxon>
        <taxon>Frankiales</taxon>
        <taxon>Frankiaceae</taxon>
        <taxon>Parafrankia</taxon>
    </lineage>
</organism>
<sequence length="449" mass="45740">MVVPSTAPASDDLFRRAQRVVPGGVNSPVRAFRAVGGTPRFMTSGSGPRLVDADGRTYVDLVCSWGPMILGHAHPDVVQAITAAAARGTSFGTPTPGEVELAELIVERVAPVEQVRLVNSGTEATMSAIRLARGFTGRPTIVKFAGCYHGHVDALLASAGSGVATLGLPDTPGVTGAATADTIVLPYNDLALVEATFAERGDTIAAVITESVAANMGVVPPLPGFNAGLRRLCDAHGALLVFDEVMTGFRVSRTGWWGLEGAVEGWAPDLFTFGKVMGGGLPAAAFGGRADVMARLAPAGPVYQAGTLSGNPLAVAAGLATLRACTDEVYATVDARAADVAGIVSTALNEQGVPHLLNSAGSLFSVFFTDATAVIDYAGAKRQASERYAAFFHSMLDAGVYLPPSAFEAWFVSAAHDDEAVERIAAAAPAAARAAAAVGAPVAVGGGAV</sequence>
<comment type="catalytic activity">
    <reaction evidence="1">
        <text>(S)-4-amino-5-oxopentanoate = 5-aminolevulinate</text>
        <dbReference type="Rhea" id="RHEA:14265"/>
        <dbReference type="ChEBI" id="CHEBI:57501"/>
        <dbReference type="ChEBI" id="CHEBI:356416"/>
        <dbReference type="EC" id="5.4.3.8"/>
    </reaction>
</comment>
<comment type="cofactor">
    <cofactor evidence="1">
        <name>pyridoxal 5'-phosphate</name>
        <dbReference type="ChEBI" id="CHEBI:597326"/>
    </cofactor>
</comment>
<comment type="pathway">
    <text evidence="1">Porphyrin-containing compound metabolism; protoporphyrin-IX biosynthesis; 5-aminolevulinate from L-glutamyl-tRNA(Glu): step 2/2.</text>
</comment>
<comment type="subunit">
    <text evidence="1">Homodimer.</text>
</comment>
<comment type="subcellular location">
    <subcellularLocation>
        <location evidence="1">Cytoplasm</location>
    </subcellularLocation>
</comment>
<comment type="similarity">
    <text evidence="1">Belongs to the class-III pyridoxal-phosphate-dependent aminotransferase family. HemL subfamily.</text>
</comment>
<name>GSA_PARS2</name>
<gene>
    <name evidence="1" type="primary">hemL</name>
    <name type="ordered locus">Franean1_6123</name>
</gene>
<proteinExistence type="inferred from homology"/>
<protein>
    <recommendedName>
        <fullName evidence="1">Glutamate-1-semialdehyde 2,1-aminomutase</fullName>
        <shortName evidence="1">GSA</shortName>
        <ecNumber evidence="1">5.4.3.8</ecNumber>
    </recommendedName>
    <alternativeName>
        <fullName evidence="1">Glutamate-1-semialdehyde aminotransferase</fullName>
        <shortName evidence="1">GSA-AT</shortName>
    </alternativeName>
</protein>